<name>CAPA_STAAM</name>
<proteinExistence type="inferred from homology"/>
<protein>
    <recommendedName>
        <fullName>Capsular polysaccharide biosynthesis protein CapA</fullName>
    </recommendedName>
</protein>
<sequence length="220" mass="24398">MKEKFDLVKLLNILKKNIKLLLILPAICLVVSTALTFFVMPDKYTASTQILVNMKKSSSDLAFQNVQSSLQSVNTYTEIIKSPRILDKVSREFDGQYSTAELNSFLKVTNQTNSQIITVSVTTGNKSESDKIVNRISKVFAHDMPKIMSVDNVTILSSAHDNAVKVSPIVSVNLVISIIVGIVLAILIIFLKELLDKRIKTEEDVESQLGLPILGSIQKF</sequence>
<dbReference type="EMBL" id="BA000017">
    <property type="protein sequence ID" value="BAB58826.1"/>
    <property type="molecule type" value="Genomic_DNA"/>
</dbReference>
<dbReference type="RefSeq" id="WP_000659683.1">
    <property type="nucleotide sequence ID" value="NC_002758.2"/>
</dbReference>
<dbReference type="SMR" id="P63858"/>
<dbReference type="KEGG" id="sav:SAV2664"/>
<dbReference type="HOGENOM" id="CLU_082668_1_1_9"/>
<dbReference type="PhylomeDB" id="P63858"/>
<dbReference type="UniPathway" id="UPA00934"/>
<dbReference type="Proteomes" id="UP000002481">
    <property type="component" value="Chromosome"/>
</dbReference>
<dbReference type="GO" id="GO:0005886">
    <property type="term" value="C:plasma membrane"/>
    <property type="evidence" value="ECO:0007669"/>
    <property type="project" value="UniProtKB-SubCell"/>
</dbReference>
<dbReference type="GO" id="GO:0004713">
    <property type="term" value="F:protein tyrosine kinase activity"/>
    <property type="evidence" value="ECO:0007669"/>
    <property type="project" value="TreeGrafter"/>
</dbReference>
<dbReference type="GO" id="GO:0045227">
    <property type="term" value="P:capsule polysaccharide biosynthetic process"/>
    <property type="evidence" value="ECO:0007669"/>
    <property type="project" value="UniProtKB-UniPathway"/>
</dbReference>
<dbReference type="InterPro" id="IPR050445">
    <property type="entry name" value="Bact_polysacc_biosynth/exp"/>
</dbReference>
<dbReference type="InterPro" id="IPR003856">
    <property type="entry name" value="LPS_length_determ_N_term"/>
</dbReference>
<dbReference type="PANTHER" id="PTHR32309:SF13">
    <property type="entry name" value="FERRIC ENTEROBACTIN TRANSPORT PROTEIN FEPE"/>
    <property type="match status" value="1"/>
</dbReference>
<dbReference type="PANTHER" id="PTHR32309">
    <property type="entry name" value="TYROSINE-PROTEIN KINASE"/>
    <property type="match status" value="1"/>
</dbReference>
<dbReference type="Pfam" id="PF02706">
    <property type="entry name" value="Wzz"/>
    <property type="match status" value="1"/>
</dbReference>
<gene>
    <name type="primary">capA</name>
    <name type="ordered locus">SAV2664</name>
</gene>
<accession>P63858</accession>
<accession>Q99QX4</accession>
<keyword id="KW-0972">Capsule biogenesis/degradation</keyword>
<keyword id="KW-1003">Cell membrane</keyword>
<keyword id="KW-0270">Exopolysaccharide synthesis</keyword>
<keyword id="KW-0472">Membrane</keyword>
<keyword id="KW-0812">Transmembrane</keyword>
<keyword id="KW-1133">Transmembrane helix</keyword>
<feature type="chain" id="PRO_0000217218" description="Capsular polysaccharide biosynthesis protein CapA">
    <location>
        <begin position="1"/>
        <end position="220"/>
    </location>
</feature>
<feature type="transmembrane region" description="Helical" evidence="2">
    <location>
        <begin position="20"/>
        <end position="40"/>
    </location>
</feature>
<feature type="transmembrane region" description="Helical" evidence="2">
    <location>
        <begin position="171"/>
        <end position="191"/>
    </location>
</feature>
<reference key="1">
    <citation type="journal article" date="2001" name="Lancet">
        <title>Whole genome sequencing of meticillin-resistant Staphylococcus aureus.</title>
        <authorList>
            <person name="Kuroda M."/>
            <person name="Ohta T."/>
            <person name="Uchiyama I."/>
            <person name="Baba T."/>
            <person name="Yuzawa H."/>
            <person name="Kobayashi I."/>
            <person name="Cui L."/>
            <person name="Oguchi A."/>
            <person name="Aoki K."/>
            <person name="Nagai Y."/>
            <person name="Lian J.-Q."/>
            <person name="Ito T."/>
            <person name="Kanamori M."/>
            <person name="Matsumaru H."/>
            <person name="Maruyama A."/>
            <person name="Murakami H."/>
            <person name="Hosoyama A."/>
            <person name="Mizutani-Ui Y."/>
            <person name="Takahashi N.K."/>
            <person name="Sawano T."/>
            <person name="Inoue R."/>
            <person name="Kaito C."/>
            <person name="Sekimizu K."/>
            <person name="Hirakawa H."/>
            <person name="Kuhara S."/>
            <person name="Goto S."/>
            <person name="Yabuzaki J."/>
            <person name="Kanehisa M."/>
            <person name="Yamashita A."/>
            <person name="Oshima K."/>
            <person name="Furuya K."/>
            <person name="Yoshino C."/>
            <person name="Shiba T."/>
            <person name="Hattori M."/>
            <person name="Ogasawara N."/>
            <person name="Hayashi H."/>
            <person name="Hiramatsu K."/>
        </authorList>
    </citation>
    <scope>NUCLEOTIDE SEQUENCE [LARGE SCALE GENOMIC DNA]</scope>
    <source>
        <strain>Mu50 / ATCC 700699</strain>
    </source>
</reference>
<comment type="function">
    <text evidence="1">Required for the biosynthesis of type 1 capsular polysaccharide.</text>
</comment>
<comment type="pathway">
    <text>Capsule biogenesis; capsule polysaccharide biosynthesis.</text>
</comment>
<comment type="subcellular location">
    <subcellularLocation>
        <location evidence="3">Cell membrane</location>
        <topology evidence="3">Multi-pass membrane protein</topology>
    </subcellularLocation>
</comment>
<comment type="similarity">
    <text evidence="3">Belongs to the CpsC/CapA family.</text>
</comment>
<evidence type="ECO:0000250" key="1"/>
<evidence type="ECO:0000255" key="2"/>
<evidence type="ECO:0000305" key="3"/>
<organism>
    <name type="scientific">Staphylococcus aureus (strain Mu50 / ATCC 700699)</name>
    <dbReference type="NCBI Taxonomy" id="158878"/>
    <lineage>
        <taxon>Bacteria</taxon>
        <taxon>Bacillati</taxon>
        <taxon>Bacillota</taxon>
        <taxon>Bacilli</taxon>
        <taxon>Bacillales</taxon>
        <taxon>Staphylococcaceae</taxon>
        <taxon>Staphylococcus</taxon>
    </lineage>
</organism>